<feature type="chain" id="PRO_0000263677" description="Cytochrome c oxidase assembly protein COX14">
    <location>
        <begin position="1"/>
        <end position="57"/>
    </location>
</feature>
<feature type="topological domain" description="Mitochondrial intermembrane" evidence="6">
    <location>
        <begin position="1"/>
        <end position="14"/>
    </location>
</feature>
<feature type="transmembrane region" description="Helical" evidence="1">
    <location>
        <begin position="15"/>
        <end position="37"/>
    </location>
</feature>
<feature type="topological domain" description="Cytoplasmic" evidence="6">
    <location>
        <begin position="38"/>
        <end position="57"/>
    </location>
</feature>
<feature type="sequence variant" id="VAR_067038" description="In MC4DN10; dbSNP:rs587776904." evidence="2">
    <original>M</original>
    <variation>I</variation>
    <location>
        <position position="19"/>
    </location>
</feature>
<organism>
    <name type="scientific">Homo sapiens</name>
    <name type="common">Human</name>
    <dbReference type="NCBI Taxonomy" id="9606"/>
    <lineage>
        <taxon>Eukaryota</taxon>
        <taxon>Metazoa</taxon>
        <taxon>Chordata</taxon>
        <taxon>Craniata</taxon>
        <taxon>Vertebrata</taxon>
        <taxon>Euteleostomi</taxon>
        <taxon>Mammalia</taxon>
        <taxon>Eutheria</taxon>
        <taxon>Euarchontoglires</taxon>
        <taxon>Primates</taxon>
        <taxon>Haplorrhini</taxon>
        <taxon>Catarrhini</taxon>
        <taxon>Hominidae</taxon>
        <taxon>Homo</taxon>
    </lineage>
</organism>
<protein>
    <recommendedName>
        <fullName>Cytochrome c oxidase assembly protein COX14</fullName>
    </recommendedName>
</protein>
<reference key="1">
    <citation type="journal article" date="2004" name="Nat. Genet.">
        <title>Complete sequencing and characterization of 21,243 full-length human cDNAs.</title>
        <authorList>
            <person name="Ota T."/>
            <person name="Suzuki Y."/>
            <person name="Nishikawa T."/>
            <person name="Otsuki T."/>
            <person name="Sugiyama T."/>
            <person name="Irie R."/>
            <person name="Wakamatsu A."/>
            <person name="Hayashi K."/>
            <person name="Sato H."/>
            <person name="Nagai K."/>
            <person name="Kimura K."/>
            <person name="Makita H."/>
            <person name="Sekine M."/>
            <person name="Obayashi M."/>
            <person name="Nishi T."/>
            <person name="Shibahara T."/>
            <person name="Tanaka T."/>
            <person name="Ishii S."/>
            <person name="Yamamoto J."/>
            <person name="Saito K."/>
            <person name="Kawai Y."/>
            <person name="Isono Y."/>
            <person name="Nakamura Y."/>
            <person name="Nagahari K."/>
            <person name="Murakami K."/>
            <person name="Yasuda T."/>
            <person name="Iwayanagi T."/>
            <person name="Wagatsuma M."/>
            <person name="Shiratori A."/>
            <person name="Sudo H."/>
            <person name="Hosoiri T."/>
            <person name="Kaku Y."/>
            <person name="Kodaira H."/>
            <person name="Kondo H."/>
            <person name="Sugawara M."/>
            <person name="Takahashi M."/>
            <person name="Kanda K."/>
            <person name="Yokoi T."/>
            <person name="Furuya T."/>
            <person name="Kikkawa E."/>
            <person name="Omura Y."/>
            <person name="Abe K."/>
            <person name="Kamihara K."/>
            <person name="Katsuta N."/>
            <person name="Sato K."/>
            <person name="Tanikawa M."/>
            <person name="Yamazaki M."/>
            <person name="Ninomiya K."/>
            <person name="Ishibashi T."/>
            <person name="Yamashita H."/>
            <person name="Murakawa K."/>
            <person name="Fujimori K."/>
            <person name="Tanai H."/>
            <person name="Kimata M."/>
            <person name="Watanabe M."/>
            <person name="Hiraoka S."/>
            <person name="Chiba Y."/>
            <person name="Ishida S."/>
            <person name="Ono Y."/>
            <person name="Takiguchi S."/>
            <person name="Watanabe S."/>
            <person name="Yosida M."/>
            <person name="Hotuta T."/>
            <person name="Kusano J."/>
            <person name="Kanehori K."/>
            <person name="Takahashi-Fujii A."/>
            <person name="Hara H."/>
            <person name="Tanase T.-O."/>
            <person name="Nomura Y."/>
            <person name="Togiya S."/>
            <person name="Komai F."/>
            <person name="Hara R."/>
            <person name="Takeuchi K."/>
            <person name="Arita M."/>
            <person name="Imose N."/>
            <person name="Musashino K."/>
            <person name="Yuuki H."/>
            <person name="Oshima A."/>
            <person name="Sasaki N."/>
            <person name="Aotsuka S."/>
            <person name="Yoshikawa Y."/>
            <person name="Matsunawa H."/>
            <person name="Ichihara T."/>
            <person name="Shiohata N."/>
            <person name="Sano S."/>
            <person name="Moriya S."/>
            <person name="Momiyama H."/>
            <person name="Satoh N."/>
            <person name="Takami S."/>
            <person name="Terashima Y."/>
            <person name="Suzuki O."/>
            <person name="Nakagawa S."/>
            <person name="Senoh A."/>
            <person name="Mizoguchi H."/>
            <person name="Goto Y."/>
            <person name="Shimizu F."/>
            <person name="Wakebe H."/>
            <person name="Hishigaki H."/>
            <person name="Watanabe T."/>
            <person name="Sugiyama A."/>
            <person name="Takemoto M."/>
            <person name="Kawakami B."/>
            <person name="Yamazaki M."/>
            <person name="Watanabe K."/>
            <person name="Kumagai A."/>
            <person name="Itakura S."/>
            <person name="Fukuzumi Y."/>
            <person name="Fujimori Y."/>
            <person name="Komiyama M."/>
            <person name="Tashiro H."/>
            <person name="Tanigami A."/>
            <person name="Fujiwara T."/>
            <person name="Ono T."/>
            <person name="Yamada K."/>
            <person name="Fujii Y."/>
            <person name="Ozaki K."/>
            <person name="Hirao M."/>
            <person name="Ohmori Y."/>
            <person name="Kawabata A."/>
            <person name="Hikiji T."/>
            <person name="Kobatake N."/>
            <person name="Inagaki H."/>
            <person name="Ikema Y."/>
            <person name="Okamoto S."/>
            <person name="Okitani R."/>
            <person name="Kawakami T."/>
            <person name="Noguchi S."/>
            <person name="Itoh T."/>
            <person name="Shigeta K."/>
            <person name="Senba T."/>
            <person name="Matsumura K."/>
            <person name="Nakajima Y."/>
            <person name="Mizuno T."/>
            <person name="Morinaga M."/>
            <person name="Sasaki M."/>
            <person name="Togashi T."/>
            <person name="Oyama M."/>
            <person name="Hata H."/>
            <person name="Watanabe M."/>
            <person name="Komatsu T."/>
            <person name="Mizushima-Sugano J."/>
            <person name="Satoh T."/>
            <person name="Shirai Y."/>
            <person name="Takahashi Y."/>
            <person name="Nakagawa K."/>
            <person name="Okumura K."/>
            <person name="Nagase T."/>
            <person name="Nomura N."/>
            <person name="Kikuchi H."/>
            <person name="Masuho Y."/>
            <person name="Yamashita R."/>
            <person name="Nakai K."/>
            <person name="Yada T."/>
            <person name="Nakamura Y."/>
            <person name="Ohara O."/>
            <person name="Isogai T."/>
            <person name="Sugano S."/>
        </authorList>
    </citation>
    <scope>NUCLEOTIDE SEQUENCE [LARGE SCALE MRNA]</scope>
</reference>
<reference key="2">
    <citation type="journal article" date="2006" name="Nature">
        <title>The finished DNA sequence of human chromosome 12.</title>
        <authorList>
            <person name="Scherer S.E."/>
            <person name="Muzny D.M."/>
            <person name="Buhay C.J."/>
            <person name="Chen R."/>
            <person name="Cree A."/>
            <person name="Ding Y."/>
            <person name="Dugan-Rocha S."/>
            <person name="Gill R."/>
            <person name="Gunaratne P."/>
            <person name="Harris R.A."/>
            <person name="Hawes A.C."/>
            <person name="Hernandez J."/>
            <person name="Hodgson A.V."/>
            <person name="Hume J."/>
            <person name="Jackson A."/>
            <person name="Khan Z.M."/>
            <person name="Kovar-Smith C."/>
            <person name="Lewis L.R."/>
            <person name="Lozado R.J."/>
            <person name="Metzker M.L."/>
            <person name="Milosavljevic A."/>
            <person name="Miner G.R."/>
            <person name="Montgomery K.T."/>
            <person name="Morgan M.B."/>
            <person name="Nazareth L.V."/>
            <person name="Scott G."/>
            <person name="Sodergren E."/>
            <person name="Song X.-Z."/>
            <person name="Steffen D."/>
            <person name="Lovering R.C."/>
            <person name="Wheeler D.A."/>
            <person name="Worley K.C."/>
            <person name="Yuan Y."/>
            <person name="Zhang Z."/>
            <person name="Adams C.Q."/>
            <person name="Ansari-Lari M.A."/>
            <person name="Ayele M."/>
            <person name="Brown M.J."/>
            <person name="Chen G."/>
            <person name="Chen Z."/>
            <person name="Clerc-Blankenburg K.P."/>
            <person name="Davis C."/>
            <person name="Delgado O."/>
            <person name="Dinh H.H."/>
            <person name="Draper H."/>
            <person name="Gonzalez-Garay M.L."/>
            <person name="Havlak P."/>
            <person name="Jackson L.R."/>
            <person name="Jacob L.S."/>
            <person name="Kelly S.H."/>
            <person name="Li L."/>
            <person name="Li Z."/>
            <person name="Liu J."/>
            <person name="Liu W."/>
            <person name="Lu J."/>
            <person name="Maheshwari M."/>
            <person name="Nguyen B.-V."/>
            <person name="Okwuonu G.O."/>
            <person name="Pasternak S."/>
            <person name="Perez L.M."/>
            <person name="Plopper F.J.H."/>
            <person name="Santibanez J."/>
            <person name="Shen H."/>
            <person name="Tabor P.E."/>
            <person name="Verduzco D."/>
            <person name="Waldron L."/>
            <person name="Wang Q."/>
            <person name="Williams G.A."/>
            <person name="Zhang J."/>
            <person name="Zhou J."/>
            <person name="Allen C.C."/>
            <person name="Amin A.G."/>
            <person name="Anyalebechi V."/>
            <person name="Bailey M."/>
            <person name="Barbaria J.A."/>
            <person name="Bimage K.E."/>
            <person name="Bryant N.P."/>
            <person name="Burch P.E."/>
            <person name="Burkett C.E."/>
            <person name="Burrell K.L."/>
            <person name="Calderon E."/>
            <person name="Cardenas V."/>
            <person name="Carter K."/>
            <person name="Casias K."/>
            <person name="Cavazos I."/>
            <person name="Cavazos S.R."/>
            <person name="Ceasar H."/>
            <person name="Chacko J."/>
            <person name="Chan S.N."/>
            <person name="Chavez D."/>
            <person name="Christopoulos C."/>
            <person name="Chu J."/>
            <person name="Cockrell R."/>
            <person name="Cox C.D."/>
            <person name="Dang M."/>
            <person name="Dathorne S.R."/>
            <person name="David R."/>
            <person name="Davis C.M."/>
            <person name="Davy-Carroll L."/>
            <person name="Deshazo D.R."/>
            <person name="Donlin J.E."/>
            <person name="D'Souza L."/>
            <person name="Eaves K.A."/>
            <person name="Egan A."/>
            <person name="Emery-Cohen A.J."/>
            <person name="Escotto M."/>
            <person name="Flagg N."/>
            <person name="Forbes L.D."/>
            <person name="Gabisi A.M."/>
            <person name="Garza M."/>
            <person name="Hamilton C."/>
            <person name="Henderson N."/>
            <person name="Hernandez O."/>
            <person name="Hines S."/>
            <person name="Hogues M.E."/>
            <person name="Huang M."/>
            <person name="Idlebird D.G."/>
            <person name="Johnson R."/>
            <person name="Jolivet A."/>
            <person name="Jones S."/>
            <person name="Kagan R."/>
            <person name="King L.M."/>
            <person name="Leal B."/>
            <person name="Lebow H."/>
            <person name="Lee S."/>
            <person name="LeVan J.M."/>
            <person name="Lewis L.C."/>
            <person name="London P."/>
            <person name="Lorensuhewa L.M."/>
            <person name="Loulseged H."/>
            <person name="Lovett D.A."/>
            <person name="Lucier A."/>
            <person name="Lucier R.L."/>
            <person name="Ma J."/>
            <person name="Madu R.C."/>
            <person name="Mapua P."/>
            <person name="Martindale A.D."/>
            <person name="Martinez E."/>
            <person name="Massey E."/>
            <person name="Mawhiney S."/>
            <person name="Meador M.G."/>
            <person name="Mendez S."/>
            <person name="Mercado C."/>
            <person name="Mercado I.C."/>
            <person name="Merritt C.E."/>
            <person name="Miner Z.L."/>
            <person name="Minja E."/>
            <person name="Mitchell T."/>
            <person name="Mohabbat F."/>
            <person name="Mohabbat K."/>
            <person name="Montgomery B."/>
            <person name="Moore N."/>
            <person name="Morris S."/>
            <person name="Munidasa M."/>
            <person name="Ngo R.N."/>
            <person name="Nguyen N.B."/>
            <person name="Nickerson E."/>
            <person name="Nwaokelemeh O.O."/>
            <person name="Nwokenkwo S."/>
            <person name="Obregon M."/>
            <person name="Oguh M."/>
            <person name="Oragunye N."/>
            <person name="Oviedo R.J."/>
            <person name="Parish B.J."/>
            <person name="Parker D.N."/>
            <person name="Parrish J."/>
            <person name="Parks K.L."/>
            <person name="Paul H.A."/>
            <person name="Payton B.A."/>
            <person name="Perez A."/>
            <person name="Perrin W."/>
            <person name="Pickens A."/>
            <person name="Primus E.L."/>
            <person name="Pu L.-L."/>
            <person name="Puazo M."/>
            <person name="Quiles M.M."/>
            <person name="Quiroz J.B."/>
            <person name="Rabata D."/>
            <person name="Reeves K."/>
            <person name="Ruiz S.J."/>
            <person name="Shao H."/>
            <person name="Sisson I."/>
            <person name="Sonaike T."/>
            <person name="Sorelle R.P."/>
            <person name="Sutton A.E."/>
            <person name="Svatek A.F."/>
            <person name="Svetz L.A."/>
            <person name="Tamerisa K.S."/>
            <person name="Taylor T.R."/>
            <person name="Teague B."/>
            <person name="Thomas N."/>
            <person name="Thorn R.D."/>
            <person name="Trejos Z.Y."/>
            <person name="Trevino B.K."/>
            <person name="Ukegbu O.N."/>
            <person name="Urban J.B."/>
            <person name="Vasquez L.I."/>
            <person name="Vera V.A."/>
            <person name="Villasana D.M."/>
            <person name="Wang L."/>
            <person name="Ward-Moore S."/>
            <person name="Warren J.T."/>
            <person name="Wei X."/>
            <person name="White F."/>
            <person name="Williamson A.L."/>
            <person name="Wleczyk R."/>
            <person name="Wooden H.S."/>
            <person name="Wooden S.H."/>
            <person name="Yen J."/>
            <person name="Yoon L."/>
            <person name="Yoon V."/>
            <person name="Zorrilla S.E."/>
            <person name="Nelson D."/>
            <person name="Kucherlapati R."/>
            <person name="Weinstock G."/>
            <person name="Gibbs R.A."/>
        </authorList>
    </citation>
    <scope>NUCLEOTIDE SEQUENCE [LARGE SCALE GENOMIC DNA]</scope>
</reference>
<reference key="3">
    <citation type="submission" date="2005-07" db="EMBL/GenBank/DDBJ databases">
        <authorList>
            <person name="Mural R.J."/>
            <person name="Istrail S."/>
            <person name="Sutton G.G."/>
            <person name="Florea L."/>
            <person name="Halpern A.L."/>
            <person name="Mobarry C.M."/>
            <person name="Lippert R."/>
            <person name="Walenz B."/>
            <person name="Shatkay H."/>
            <person name="Dew I."/>
            <person name="Miller J.R."/>
            <person name="Flanigan M.J."/>
            <person name="Edwards N.J."/>
            <person name="Bolanos R."/>
            <person name="Fasulo D."/>
            <person name="Halldorsson B.V."/>
            <person name="Hannenhalli S."/>
            <person name="Turner R."/>
            <person name="Yooseph S."/>
            <person name="Lu F."/>
            <person name="Nusskern D.R."/>
            <person name="Shue B.C."/>
            <person name="Zheng X.H."/>
            <person name="Zhong F."/>
            <person name="Delcher A.L."/>
            <person name="Huson D.H."/>
            <person name="Kravitz S.A."/>
            <person name="Mouchard L."/>
            <person name="Reinert K."/>
            <person name="Remington K.A."/>
            <person name="Clark A.G."/>
            <person name="Waterman M.S."/>
            <person name="Eichler E.E."/>
            <person name="Adams M.D."/>
            <person name="Hunkapiller M.W."/>
            <person name="Myers E.W."/>
            <person name="Venter J.C."/>
        </authorList>
    </citation>
    <scope>NUCLEOTIDE SEQUENCE [LARGE SCALE GENOMIC DNA]</scope>
</reference>
<reference key="4">
    <citation type="journal article" date="2004" name="Genome Res.">
        <title>The status, quality, and expansion of the NIH full-length cDNA project: the Mammalian Gene Collection (MGC).</title>
        <authorList>
            <consortium name="The MGC Project Team"/>
        </authorList>
    </citation>
    <scope>NUCLEOTIDE SEQUENCE [LARGE SCALE MRNA]</scope>
    <source>
        <tissue>Brain</tissue>
    </source>
</reference>
<reference key="5">
    <citation type="journal article" date="2012" name="Cell">
        <title>MITRAC links mitochondrial protein translocation to respiratory-chain assembly and translational regulation.</title>
        <authorList>
            <person name="Mick D.U."/>
            <person name="Dennerlein S."/>
            <person name="Wiese H."/>
            <person name="Reinhold R."/>
            <person name="Pacheu-Grau D."/>
            <person name="Lorenzi I."/>
            <person name="Sasarman F."/>
            <person name="Weraarpachai W."/>
            <person name="Shoubridge E.A."/>
            <person name="Warscheid B."/>
            <person name="Rehling P."/>
        </authorList>
    </citation>
    <scope>IDENTIFICATION IN SOME MITRAC COMPLEX</scope>
</reference>
<reference key="6">
    <citation type="journal article" date="2012" name="Genome Biol.">
        <title>Iterative orthology prediction uncovers new mitochondrial proteins and identifies C12orf62 as the human ortholog of COX14, a protein involved in the assembly of cytochrome c oxidase.</title>
        <authorList>
            <person name="Szklarczyk R."/>
            <person name="Wanschers B.F."/>
            <person name="Cuypers T.D."/>
            <person name="Esseling J.J."/>
            <person name="Riemersma M."/>
            <person name="van den Brand M.A."/>
            <person name="Gloerich J."/>
            <person name="Lasonder E."/>
            <person name="van den Heuvel L.P."/>
            <person name="Nijtmans L.G."/>
            <person name="Huynen M.A."/>
        </authorList>
    </citation>
    <scope>FUNCTION</scope>
    <scope>SUBCELLULAR LOCATION</scope>
</reference>
<reference key="7">
    <citation type="journal article" date="2016" name="Cell Rep.">
        <title>APEX Fingerprinting Reveals the Subcellular Localization of Proteins of Interest.</title>
        <authorList>
            <person name="Lee S.Y."/>
            <person name="Kang M.G."/>
            <person name="Park J.S."/>
            <person name="Lee G."/>
            <person name="Ting A.Y."/>
            <person name="Rhee H.W."/>
        </authorList>
    </citation>
    <scope>SUBCELLULAR LOCATION</scope>
    <scope>TOPOLOGY</scope>
</reference>
<reference key="8">
    <citation type="journal article" date="2012" name="Am. J. Hum. Genet.">
        <title>Mutations in C12orf62, a factor that couples COX I synthesis with cytochrome c oxidase assembly, cause fatal neonatal lactic acidosis.</title>
        <authorList>
            <person name="Weraarpachai W."/>
            <person name="Sasarman F."/>
            <person name="Nishimura T."/>
            <person name="Antonicka H."/>
            <person name="Aure K."/>
            <person name="Rotig A."/>
            <person name="Lombes A."/>
            <person name="Shoubridge E.A."/>
        </authorList>
    </citation>
    <scope>INVOLVEMENT IN MC4DN10</scope>
    <scope>VARIANT MC4DN10 ILE-19</scope>
    <scope>SUBCELLULAR LOCATION</scope>
    <scope>FUNCTION</scope>
</reference>
<accession>Q96I36</accession>
<accession>B2R5G6</accession>
<evidence type="ECO:0000255" key="1"/>
<evidence type="ECO:0000269" key="2">
    <source>
    </source>
</evidence>
<evidence type="ECO:0000269" key="3">
    <source>
    </source>
</evidence>
<evidence type="ECO:0000269" key="4">
    <source>
    </source>
</evidence>
<evidence type="ECO:0000269" key="5">
    <source>
    </source>
</evidence>
<evidence type="ECO:0000305" key="6">
    <source>
    </source>
</evidence>
<gene>
    <name type="primary">COX14</name>
    <name type="synonym">C12orf62</name>
</gene>
<name>COX14_HUMAN</name>
<proteinExistence type="evidence at protein level"/>
<comment type="function">
    <text evidence="2 3">Core component of the MITRAC (mitochondrial translation regulation assembly intermediate of cytochrome c oxidase complex) complex, that regulates cytochrome c oxidase assembly. Requires for coordination of the early steps of cytochrome c oxidase assembly with the synthesis of MT-CO1.</text>
</comment>
<comment type="subunit">
    <text evidence="4">Along with COA3, core component of the MITRAC (mitochondrial translation regulation assembly intermediate of cytochrome c oxidase complex) complex.</text>
</comment>
<comment type="interaction">
    <interactant intactId="EBI-6570698">
        <id>Q96I36</id>
    </interactant>
    <interactant intactId="EBI-6165891">
        <id>Q14696</id>
        <label>MESD</label>
    </interactant>
    <organismsDiffer>false</organismsDiffer>
    <experiments>3</experiments>
</comment>
<comment type="subcellular location">
    <subcellularLocation>
        <location evidence="2 3 5">Mitochondrion outer membrane</location>
        <topology evidence="1">Single-pass membrane protein</topology>
    </subcellularLocation>
</comment>
<comment type="disease" evidence="2">
    <disease id="DI-05932">
        <name>Mitochondrial complex IV deficiency, nuclear type 10</name>
        <acronym>MC4DN10</acronym>
        <description>An autosomal recessive mitochondrial disorder that manifests with neonatal neurological and respiratory distress. Clinical features include facial dysmorphism, hypotelorism, microphthalmia, an ogival palate, and severe metabolic acidosis. Death occurs in early infancy. Autoptic examination reveals brain hypertrophy, diffuse alteration of white matter myelination, numerous cavities in the parieto-occipital region, brainstem and cerebellum, as well as hepatomegaly, hypertrophic cardiomyopathy, renal hypoplasia, and adrenal hyperplasia. Patient tissues show decreased levels and activity of mitochondrial respiratory complex IV.</description>
        <dbReference type="MIM" id="619053"/>
    </disease>
    <text>The disease may be caused by variants affecting the gene represented in this entry.</text>
</comment>
<dbReference type="EMBL" id="AK312180">
    <property type="protein sequence ID" value="BAG35113.1"/>
    <property type="molecule type" value="mRNA"/>
</dbReference>
<dbReference type="EMBL" id="AC025154">
    <property type="status" value="NOT_ANNOTATED_CDS"/>
    <property type="molecule type" value="Genomic_DNA"/>
</dbReference>
<dbReference type="EMBL" id="AC074032">
    <property type="status" value="NOT_ANNOTATED_CDS"/>
    <property type="molecule type" value="Genomic_DNA"/>
</dbReference>
<dbReference type="EMBL" id="CH471111">
    <property type="protein sequence ID" value="EAW58130.1"/>
    <property type="molecule type" value="Genomic_DNA"/>
</dbReference>
<dbReference type="EMBL" id="BC007849">
    <property type="protein sequence ID" value="AAH07849.1"/>
    <property type="molecule type" value="mRNA"/>
</dbReference>
<dbReference type="CCDS" id="CCDS8800.1"/>
<dbReference type="RefSeq" id="NP_001244062.1">
    <property type="nucleotide sequence ID" value="NM_001257133.2"/>
</dbReference>
<dbReference type="RefSeq" id="NP_001244063.1">
    <property type="nucleotide sequence ID" value="NM_001257134.2"/>
</dbReference>
<dbReference type="RefSeq" id="NP_116290.1">
    <property type="nucleotide sequence ID" value="NM_032901.4"/>
</dbReference>
<dbReference type="RefSeq" id="XP_047285725.1">
    <property type="nucleotide sequence ID" value="XM_047429769.1"/>
</dbReference>
<dbReference type="RefSeq" id="XP_054229622.1">
    <property type="nucleotide sequence ID" value="XM_054373647.1"/>
</dbReference>
<dbReference type="BioGRID" id="124413">
    <property type="interactions" value="146"/>
</dbReference>
<dbReference type="CORUM" id="Q96I36"/>
<dbReference type="FunCoup" id="Q96I36">
    <property type="interactions" value="359"/>
</dbReference>
<dbReference type="IntAct" id="Q96I36">
    <property type="interactions" value="144"/>
</dbReference>
<dbReference type="STRING" id="9606.ENSP00000326052"/>
<dbReference type="GlyGen" id="Q96I36">
    <property type="glycosylation" value="1 site, 1 O-linked glycan (1 site)"/>
</dbReference>
<dbReference type="iPTMnet" id="Q96I36"/>
<dbReference type="PhosphoSitePlus" id="Q96I36"/>
<dbReference type="BioMuta" id="COX14"/>
<dbReference type="DMDM" id="74732019"/>
<dbReference type="jPOST" id="Q96I36"/>
<dbReference type="MassIVE" id="Q96I36"/>
<dbReference type="PaxDb" id="9606-ENSP00000446524"/>
<dbReference type="PeptideAtlas" id="Q96I36"/>
<dbReference type="ProteomicsDB" id="76810"/>
<dbReference type="Pumba" id="Q96I36"/>
<dbReference type="TopDownProteomics" id="Q96I36"/>
<dbReference type="Antibodypedia" id="49669">
    <property type="antibodies" value="11 antibodies from 6 providers"/>
</dbReference>
<dbReference type="DNASU" id="84987"/>
<dbReference type="Ensembl" id="ENST00000317943.6">
    <property type="protein sequence ID" value="ENSP00000326052.2"/>
    <property type="gene ID" value="ENSG00000178449.9"/>
</dbReference>
<dbReference type="Ensembl" id="ENST00000548985.1">
    <property type="protein sequence ID" value="ENSP00000447776.1"/>
    <property type="gene ID" value="ENSG00000178449.9"/>
</dbReference>
<dbReference type="Ensembl" id="ENST00000550487.6">
    <property type="protein sequence ID" value="ENSP00000446524.1"/>
    <property type="gene ID" value="ENSG00000178449.9"/>
</dbReference>
<dbReference type="Ensembl" id="ENST00000550654.1">
    <property type="protein sequence ID" value="ENSP00000450331.1"/>
    <property type="gene ID" value="ENSG00000178449.9"/>
</dbReference>
<dbReference type="GeneID" id="84987"/>
<dbReference type="KEGG" id="hsa:84987"/>
<dbReference type="MANE-Select" id="ENST00000550487.6">
    <property type="protein sequence ID" value="ENSP00000446524.1"/>
    <property type="RefSeq nucleotide sequence ID" value="NM_032901.4"/>
    <property type="RefSeq protein sequence ID" value="NP_116290.1"/>
</dbReference>
<dbReference type="UCSC" id="uc001rwb.3">
    <property type="organism name" value="human"/>
</dbReference>
<dbReference type="AGR" id="HGNC:28216"/>
<dbReference type="CTD" id="84987"/>
<dbReference type="DisGeNET" id="84987"/>
<dbReference type="GeneCards" id="COX14"/>
<dbReference type="HGNC" id="HGNC:28216">
    <property type="gene designation" value="COX14"/>
</dbReference>
<dbReference type="HPA" id="ENSG00000178449">
    <property type="expression patterns" value="Low tissue specificity"/>
</dbReference>
<dbReference type="MalaCards" id="COX14"/>
<dbReference type="MIM" id="614478">
    <property type="type" value="gene"/>
</dbReference>
<dbReference type="MIM" id="619053">
    <property type="type" value="phenotype"/>
</dbReference>
<dbReference type="neXtProt" id="NX_Q96I36"/>
<dbReference type="OpenTargets" id="ENSG00000178449"/>
<dbReference type="Orphanet" id="254905">
    <property type="disease" value="Isolated cytochrome C oxidase deficiency"/>
</dbReference>
<dbReference type="PharmGKB" id="PA143485391"/>
<dbReference type="VEuPathDB" id="HostDB:ENSG00000178449"/>
<dbReference type="eggNOG" id="ENOG502SCZ6">
    <property type="taxonomic scope" value="Eukaryota"/>
</dbReference>
<dbReference type="GeneTree" id="ENSGT00390000002190"/>
<dbReference type="HOGENOM" id="CLU_209431_0_0_1"/>
<dbReference type="InParanoid" id="Q96I36"/>
<dbReference type="OMA" id="VYHYFQR"/>
<dbReference type="OrthoDB" id="9928108at2759"/>
<dbReference type="PAN-GO" id="Q96I36">
    <property type="GO annotations" value="2 GO annotations based on evolutionary models"/>
</dbReference>
<dbReference type="PhylomeDB" id="Q96I36"/>
<dbReference type="TreeFam" id="TF338398"/>
<dbReference type="PathwayCommons" id="Q96I36"/>
<dbReference type="Reactome" id="R-HSA-9864848">
    <property type="pathway name" value="Complex IV assembly"/>
</dbReference>
<dbReference type="SignaLink" id="Q96I36"/>
<dbReference type="SIGNOR" id="Q96I36"/>
<dbReference type="BioGRID-ORCS" id="84987">
    <property type="hits" value="60 hits in 1150 CRISPR screens"/>
</dbReference>
<dbReference type="ChiTaRS" id="COX14">
    <property type="organism name" value="human"/>
</dbReference>
<dbReference type="GenomeRNAi" id="84987"/>
<dbReference type="Pharos" id="Q96I36">
    <property type="development level" value="Tbio"/>
</dbReference>
<dbReference type="PRO" id="PR:Q96I36"/>
<dbReference type="Proteomes" id="UP000005640">
    <property type="component" value="Chromosome 12"/>
</dbReference>
<dbReference type="RNAct" id="Q96I36">
    <property type="molecule type" value="protein"/>
</dbReference>
<dbReference type="Bgee" id="ENSG00000178449">
    <property type="expression patterns" value="Expressed in apex of heart and 185 other cell types or tissues"/>
</dbReference>
<dbReference type="GO" id="GO:0005743">
    <property type="term" value="C:mitochondrial inner membrane"/>
    <property type="evidence" value="ECO:0000304"/>
    <property type="project" value="Reactome"/>
</dbReference>
<dbReference type="GO" id="GO:0005741">
    <property type="term" value="C:mitochondrial outer membrane"/>
    <property type="evidence" value="ECO:0000314"/>
    <property type="project" value="UniProtKB"/>
</dbReference>
<dbReference type="GO" id="GO:0005739">
    <property type="term" value="C:mitochondrion"/>
    <property type="evidence" value="ECO:0000314"/>
    <property type="project" value="UniProtKB"/>
</dbReference>
<dbReference type="GO" id="GO:0033617">
    <property type="term" value="P:mitochondrial cytochrome c oxidase assembly"/>
    <property type="evidence" value="ECO:0000315"/>
    <property type="project" value="UniProtKB"/>
</dbReference>
<dbReference type="InterPro" id="IPR029208">
    <property type="entry name" value="COX14"/>
</dbReference>
<dbReference type="PANTHER" id="PTHR36684">
    <property type="entry name" value="CYTOCHROME C OXIDASE ASSEMBLY PROTEIN COX14"/>
    <property type="match status" value="1"/>
</dbReference>
<dbReference type="PANTHER" id="PTHR36684:SF1">
    <property type="entry name" value="CYTOCHROME C OXIDASE ASSEMBLY PROTEIN COX14"/>
    <property type="match status" value="1"/>
</dbReference>
<dbReference type="Pfam" id="PF14880">
    <property type="entry name" value="COX14"/>
    <property type="match status" value="1"/>
</dbReference>
<sequence length="57" mass="6600">MPTGKQLADIGYKTFSTSMMLLTVYGGYLCSVRVYHYFQWRRAQRQAAEEQKTSGIM</sequence>
<keyword id="KW-0225">Disease variant</keyword>
<keyword id="KW-0472">Membrane</keyword>
<keyword id="KW-0496">Mitochondrion</keyword>
<keyword id="KW-1000">Mitochondrion outer membrane</keyword>
<keyword id="KW-1274">Primary mitochondrial disease</keyword>
<keyword id="KW-1267">Proteomics identification</keyword>
<keyword id="KW-1185">Reference proteome</keyword>
<keyword id="KW-0812">Transmembrane</keyword>
<keyword id="KW-1133">Transmembrane helix</keyword>